<sequence>MKRSLEQIARLVSGRVVGDAAKKVSGAAPFEQAGPEEITLAGSAGFLKRIDQTGAGALVVPTDFTDSRRNLVAVENPAAAFARIRQMFDTGCRQPVGIDPRAVIGGGFACGEDVSIGPGVVIGDHVTLGDRVLLYPGVFLGNHVRIGNDGIIHANTSILRECVLGNRVIIHAGSVIGSDGFGFAPDGEMYVKIPHSGMVQIDDDVEIGAGNAIDRATFGRTWIRQGVKTDNLVHIAHNVTVGENTIIVAQVGIAGSTTVGRHVILAGQAGISGHLDIGDNAVVGPQAGIVKSIKPGETVSGTPGMPHKLWLRAQSIVAGLPGMRKKIAELEKRLAVLEKG</sequence>
<organism>
    <name type="scientific">Desulfosudis oleivorans (strain DSM 6200 / JCM 39069 / Hxd3)</name>
    <name type="common">Desulfococcus oleovorans</name>
    <dbReference type="NCBI Taxonomy" id="96561"/>
    <lineage>
        <taxon>Bacteria</taxon>
        <taxon>Pseudomonadati</taxon>
        <taxon>Thermodesulfobacteriota</taxon>
        <taxon>Desulfobacteria</taxon>
        <taxon>Desulfobacterales</taxon>
        <taxon>Desulfosudaceae</taxon>
        <taxon>Desulfosudis</taxon>
    </lineage>
</organism>
<keyword id="KW-0012">Acyltransferase</keyword>
<keyword id="KW-0441">Lipid A biosynthesis</keyword>
<keyword id="KW-0444">Lipid biosynthesis</keyword>
<keyword id="KW-0443">Lipid metabolism</keyword>
<keyword id="KW-1185">Reference proteome</keyword>
<keyword id="KW-0677">Repeat</keyword>
<keyword id="KW-0808">Transferase</keyword>
<accession>A8ZYC0</accession>
<name>LPXD_DESOH</name>
<protein>
    <recommendedName>
        <fullName evidence="1">UDP-3-O-acylglucosamine N-acyltransferase</fullName>
        <ecNumber evidence="1">2.3.1.191</ecNumber>
    </recommendedName>
</protein>
<comment type="function">
    <text evidence="1">Catalyzes the N-acylation of UDP-3-O-acylglucosamine using 3-hydroxyacyl-ACP as the acyl donor. Is involved in the biosynthesis of lipid A, a phosphorylated glycolipid that anchors the lipopolysaccharide to the outer membrane of the cell.</text>
</comment>
<comment type="catalytic activity">
    <reaction evidence="1">
        <text>a UDP-3-O-[(3R)-3-hydroxyacyl]-alpha-D-glucosamine + a (3R)-hydroxyacyl-[ACP] = a UDP-2-N,3-O-bis[(3R)-3-hydroxyacyl]-alpha-D-glucosamine + holo-[ACP] + H(+)</text>
        <dbReference type="Rhea" id="RHEA:53836"/>
        <dbReference type="Rhea" id="RHEA-COMP:9685"/>
        <dbReference type="Rhea" id="RHEA-COMP:9945"/>
        <dbReference type="ChEBI" id="CHEBI:15378"/>
        <dbReference type="ChEBI" id="CHEBI:64479"/>
        <dbReference type="ChEBI" id="CHEBI:78827"/>
        <dbReference type="ChEBI" id="CHEBI:137740"/>
        <dbReference type="ChEBI" id="CHEBI:137748"/>
        <dbReference type="EC" id="2.3.1.191"/>
    </reaction>
</comment>
<comment type="pathway">
    <text evidence="1">Bacterial outer membrane biogenesis; LPS lipid A biosynthesis.</text>
</comment>
<comment type="subunit">
    <text evidence="1">Homotrimer.</text>
</comment>
<comment type="similarity">
    <text evidence="1">Belongs to the transferase hexapeptide repeat family. LpxD subfamily.</text>
</comment>
<reference key="1">
    <citation type="submission" date="2007-10" db="EMBL/GenBank/DDBJ databases">
        <title>Complete sequence of Desulfococcus oleovorans Hxd3.</title>
        <authorList>
            <consortium name="US DOE Joint Genome Institute"/>
            <person name="Copeland A."/>
            <person name="Lucas S."/>
            <person name="Lapidus A."/>
            <person name="Barry K."/>
            <person name="Glavina del Rio T."/>
            <person name="Dalin E."/>
            <person name="Tice H."/>
            <person name="Pitluck S."/>
            <person name="Kiss H."/>
            <person name="Brettin T."/>
            <person name="Bruce D."/>
            <person name="Detter J.C."/>
            <person name="Han C."/>
            <person name="Schmutz J."/>
            <person name="Larimer F."/>
            <person name="Land M."/>
            <person name="Hauser L."/>
            <person name="Kyrpides N."/>
            <person name="Kim E."/>
            <person name="Wawrik B."/>
            <person name="Richardson P."/>
        </authorList>
    </citation>
    <scope>NUCLEOTIDE SEQUENCE [LARGE SCALE GENOMIC DNA]</scope>
    <source>
        <strain>DSM 6200 / JCM 39069 / Hxd3</strain>
    </source>
</reference>
<proteinExistence type="inferred from homology"/>
<gene>
    <name evidence="1" type="primary">lpxD</name>
    <name type="ordered locus">Dole_2842</name>
</gene>
<feature type="chain" id="PRO_1000127677" description="UDP-3-O-acylglucosamine N-acyltransferase">
    <location>
        <begin position="1"/>
        <end position="340"/>
    </location>
</feature>
<feature type="active site" description="Proton acceptor" evidence="1">
    <location>
        <position position="237"/>
    </location>
</feature>
<dbReference type="EC" id="2.3.1.191" evidence="1"/>
<dbReference type="EMBL" id="CP000859">
    <property type="protein sequence ID" value="ABW68645.1"/>
    <property type="molecule type" value="Genomic_DNA"/>
</dbReference>
<dbReference type="RefSeq" id="WP_012176256.1">
    <property type="nucleotide sequence ID" value="NC_009943.1"/>
</dbReference>
<dbReference type="SMR" id="A8ZYC0"/>
<dbReference type="STRING" id="96561.Dole_2842"/>
<dbReference type="KEGG" id="dol:Dole_2842"/>
<dbReference type="eggNOG" id="COG1044">
    <property type="taxonomic scope" value="Bacteria"/>
</dbReference>
<dbReference type="HOGENOM" id="CLU_049865_0_0_7"/>
<dbReference type="OrthoDB" id="9784739at2"/>
<dbReference type="UniPathway" id="UPA00973"/>
<dbReference type="Proteomes" id="UP000008561">
    <property type="component" value="Chromosome"/>
</dbReference>
<dbReference type="GO" id="GO:0016020">
    <property type="term" value="C:membrane"/>
    <property type="evidence" value="ECO:0007669"/>
    <property type="project" value="GOC"/>
</dbReference>
<dbReference type="GO" id="GO:0016410">
    <property type="term" value="F:N-acyltransferase activity"/>
    <property type="evidence" value="ECO:0007669"/>
    <property type="project" value="InterPro"/>
</dbReference>
<dbReference type="GO" id="GO:0009245">
    <property type="term" value="P:lipid A biosynthetic process"/>
    <property type="evidence" value="ECO:0007669"/>
    <property type="project" value="UniProtKB-UniRule"/>
</dbReference>
<dbReference type="CDD" id="cd03352">
    <property type="entry name" value="LbH_LpxD"/>
    <property type="match status" value="1"/>
</dbReference>
<dbReference type="Gene3D" id="2.160.10.10">
    <property type="entry name" value="Hexapeptide repeat proteins"/>
    <property type="match status" value="1"/>
</dbReference>
<dbReference type="Gene3D" id="3.40.1390.10">
    <property type="entry name" value="MurE/MurF, N-terminal domain"/>
    <property type="match status" value="1"/>
</dbReference>
<dbReference type="HAMAP" id="MF_00523">
    <property type="entry name" value="LpxD"/>
    <property type="match status" value="1"/>
</dbReference>
<dbReference type="InterPro" id="IPR001451">
    <property type="entry name" value="Hexapep"/>
</dbReference>
<dbReference type="InterPro" id="IPR018357">
    <property type="entry name" value="Hexapep_transf_CS"/>
</dbReference>
<dbReference type="InterPro" id="IPR007691">
    <property type="entry name" value="LpxD"/>
</dbReference>
<dbReference type="InterPro" id="IPR011004">
    <property type="entry name" value="Trimer_LpxA-like_sf"/>
</dbReference>
<dbReference type="InterPro" id="IPR020573">
    <property type="entry name" value="UDP_GlcNAc_AcTrfase_non-rep"/>
</dbReference>
<dbReference type="NCBIfam" id="TIGR01853">
    <property type="entry name" value="lipid_A_lpxD"/>
    <property type="match status" value="1"/>
</dbReference>
<dbReference type="NCBIfam" id="NF002060">
    <property type="entry name" value="PRK00892.1"/>
    <property type="match status" value="1"/>
</dbReference>
<dbReference type="PANTHER" id="PTHR43378">
    <property type="entry name" value="UDP-3-O-ACYLGLUCOSAMINE N-ACYLTRANSFERASE"/>
    <property type="match status" value="1"/>
</dbReference>
<dbReference type="PANTHER" id="PTHR43378:SF2">
    <property type="entry name" value="UDP-3-O-ACYLGLUCOSAMINE N-ACYLTRANSFERASE 1, MITOCHONDRIAL-RELATED"/>
    <property type="match status" value="1"/>
</dbReference>
<dbReference type="Pfam" id="PF00132">
    <property type="entry name" value="Hexapep"/>
    <property type="match status" value="2"/>
</dbReference>
<dbReference type="Pfam" id="PF04613">
    <property type="entry name" value="LpxD"/>
    <property type="match status" value="1"/>
</dbReference>
<dbReference type="SUPFAM" id="SSF51161">
    <property type="entry name" value="Trimeric LpxA-like enzymes"/>
    <property type="match status" value="1"/>
</dbReference>
<dbReference type="PROSITE" id="PS00101">
    <property type="entry name" value="HEXAPEP_TRANSFERASES"/>
    <property type="match status" value="1"/>
</dbReference>
<evidence type="ECO:0000255" key="1">
    <source>
        <dbReference type="HAMAP-Rule" id="MF_00523"/>
    </source>
</evidence>